<protein>
    <recommendedName>
        <fullName evidence="2">D-alanine--D-alanine ligase</fullName>
        <ecNumber evidence="2">6.3.2.4</ecNumber>
    </recommendedName>
    <alternativeName>
        <fullName evidence="2">D-Ala-D-Ala ligase</fullName>
    </alternativeName>
    <alternativeName>
        <fullName evidence="2">D-alanylalanine synthetase</fullName>
    </alternativeName>
</protein>
<name>DDL_PAEAT</name>
<organism>
    <name type="scientific">Paenarthrobacter aurescens (strain TC1)</name>
    <dbReference type="NCBI Taxonomy" id="290340"/>
    <lineage>
        <taxon>Bacteria</taxon>
        <taxon>Bacillati</taxon>
        <taxon>Actinomycetota</taxon>
        <taxon>Actinomycetes</taxon>
        <taxon>Micrococcales</taxon>
        <taxon>Micrococcaceae</taxon>
        <taxon>Paenarthrobacter</taxon>
    </lineage>
</organism>
<feature type="chain" id="PRO_0000341053" description="D-alanine--D-alanine ligase">
    <location>
        <begin position="1"/>
        <end position="378"/>
    </location>
</feature>
<feature type="domain" description="ATP-grasp" evidence="2">
    <location>
        <begin position="157"/>
        <end position="368"/>
    </location>
</feature>
<feature type="binding site" evidence="2">
    <location>
        <begin position="189"/>
        <end position="244"/>
    </location>
    <ligand>
        <name>ATP</name>
        <dbReference type="ChEBI" id="CHEBI:30616"/>
    </ligand>
</feature>
<feature type="binding site" evidence="2">
    <location>
        <position position="322"/>
    </location>
    <ligand>
        <name>Mg(2+)</name>
        <dbReference type="ChEBI" id="CHEBI:18420"/>
        <label>1</label>
    </ligand>
</feature>
<feature type="binding site" evidence="2">
    <location>
        <position position="335"/>
    </location>
    <ligand>
        <name>Mg(2+)</name>
        <dbReference type="ChEBI" id="CHEBI:18420"/>
        <label>1</label>
    </ligand>
</feature>
<feature type="binding site" evidence="2">
    <location>
        <position position="335"/>
    </location>
    <ligand>
        <name>Mg(2+)</name>
        <dbReference type="ChEBI" id="CHEBI:18420"/>
        <label>2</label>
    </ligand>
</feature>
<feature type="binding site" evidence="2">
    <location>
        <position position="337"/>
    </location>
    <ligand>
        <name>Mg(2+)</name>
        <dbReference type="ChEBI" id="CHEBI:18420"/>
        <label>2</label>
    </ligand>
</feature>
<accession>A1R7J5</accession>
<evidence type="ECO:0000250" key="1"/>
<evidence type="ECO:0000255" key="2">
    <source>
        <dbReference type="HAMAP-Rule" id="MF_00047"/>
    </source>
</evidence>
<dbReference type="EC" id="6.3.2.4" evidence="2"/>
<dbReference type="EMBL" id="CP000474">
    <property type="protein sequence ID" value="ABM07506.1"/>
    <property type="molecule type" value="Genomic_DNA"/>
</dbReference>
<dbReference type="RefSeq" id="WP_011775149.1">
    <property type="nucleotide sequence ID" value="NC_008711.1"/>
</dbReference>
<dbReference type="SMR" id="A1R7J5"/>
<dbReference type="STRING" id="290340.AAur_2481"/>
<dbReference type="KEGG" id="aau:AAur_2481"/>
<dbReference type="eggNOG" id="COG1181">
    <property type="taxonomic scope" value="Bacteria"/>
</dbReference>
<dbReference type="HOGENOM" id="CLU_039268_0_0_11"/>
<dbReference type="OrthoDB" id="9813261at2"/>
<dbReference type="UniPathway" id="UPA00219"/>
<dbReference type="Proteomes" id="UP000000637">
    <property type="component" value="Chromosome"/>
</dbReference>
<dbReference type="GO" id="GO:0005829">
    <property type="term" value="C:cytosol"/>
    <property type="evidence" value="ECO:0007669"/>
    <property type="project" value="TreeGrafter"/>
</dbReference>
<dbReference type="GO" id="GO:0005524">
    <property type="term" value="F:ATP binding"/>
    <property type="evidence" value="ECO:0007669"/>
    <property type="project" value="UniProtKB-KW"/>
</dbReference>
<dbReference type="GO" id="GO:0008716">
    <property type="term" value="F:D-alanine-D-alanine ligase activity"/>
    <property type="evidence" value="ECO:0007669"/>
    <property type="project" value="UniProtKB-UniRule"/>
</dbReference>
<dbReference type="GO" id="GO:0046872">
    <property type="term" value="F:metal ion binding"/>
    <property type="evidence" value="ECO:0007669"/>
    <property type="project" value="UniProtKB-KW"/>
</dbReference>
<dbReference type="GO" id="GO:0071555">
    <property type="term" value="P:cell wall organization"/>
    <property type="evidence" value="ECO:0007669"/>
    <property type="project" value="UniProtKB-KW"/>
</dbReference>
<dbReference type="GO" id="GO:0009252">
    <property type="term" value="P:peptidoglycan biosynthetic process"/>
    <property type="evidence" value="ECO:0007669"/>
    <property type="project" value="UniProtKB-UniRule"/>
</dbReference>
<dbReference type="GO" id="GO:0008360">
    <property type="term" value="P:regulation of cell shape"/>
    <property type="evidence" value="ECO:0007669"/>
    <property type="project" value="UniProtKB-KW"/>
</dbReference>
<dbReference type="FunFam" id="3.30.1490.20:FF:000007">
    <property type="entry name" value="D-alanine--D-alanine ligase"/>
    <property type="match status" value="1"/>
</dbReference>
<dbReference type="FunFam" id="3.30.470.20:FF:000008">
    <property type="entry name" value="D-alanine--D-alanine ligase"/>
    <property type="match status" value="1"/>
</dbReference>
<dbReference type="Gene3D" id="3.40.50.20">
    <property type="match status" value="1"/>
</dbReference>
<dbReference type="Gene3D" id="3.30.1490.20">
    <property type="entry name" value="ATP-grasp fold, A domain"/>
    <property type="match status" value="1"/>
</dbReference>
<dbReference type="Gene3D" id="3.30.470.20">
    <property type="entry name" value="ATP-grasp fold, B domain"/>
    <property type="match status" value="1"/>
</dbReference>
<dbReference type="HAMAP" id="MF_00047">
    <property type="entry name" value="Dala_Dala_lig"/>
    <property type="match status" value="1"/>
</dbReference>
<dbReference type="InterPro" id="IPR011761">
    <property type="entry name" value="ATP-grasp"/>
</dbReference>
<dbReference type="InterPro" id="IPR013815">
    <property type="entry name" value="ATP_grasp_subdomain_1"/>
</dbReference>
<dbReference type="InterPro" id="IPR000291">
    <property type="entry name" value="D-Ala_lig_Van_CS"/>
</dbReference>
<dbReference type="InterPro" id="IPR005905">
    <property type="entry name" value="D_ala_D_ala"/>
</dbReference>
<dbReference type="InterPro" id="IPR011095">
    <property type="entry name" value="Dala_Dala_lig_C"/>
</dbReference>
<dbReference type="InterPro" id="IPR011127">
    <property type="entry name" value="Dala_Dala_lig_N"/>
</dbReference>
<dbReference type="InterPro" id="IPR016185">
    <property type="entry name" value="PreATP-grasp_dom_sf"/>
</dbReference>
<dbReference type="NCBIfam" id="TIGR01205">
    <property type="entry name" value="D_ala_D_alaTIGR"/>
    <property type="match status" value="1"/>
</dbReference>
<dbReference type="NCBIfam" id="NF002528">
    <property type="entry name" value="PRK01966.1-4"/>
    <property type="match status" value="1"/>
</dbReference>
<dbReference type="PANTHER" id="PTHR23132">
    <property type="entry name" value="D-ALANINE--D-ALANINE LIGASE"/>
    <property type="match status" value="1"/>
</dbReference>
<dbReference type="PANTHER" id="PTHR23132:SF25">
    <property type="entry name" value="D-ALANINE--D-ALANINE LIGASE A"/>
    <property type="match status" value="1"/>
</dbReference>
<dbReference type="Pfam" id="PF07478">
    <property type="entry name" value="Dala_Dala_lig_C"/>
    <property type="match status" value="1"/>
</dbReference>
<dbReference type="Pfam" id="PF01820">
    <property type="entry name" value="Dala_Dala_lig_N"/>
    <property type="match status" value="1"/>
</dbReference>
<dbReference type="PIRSF" id="PIRSF039102">
    <property type="entry name" value="Ddl/VanB"/>
    <property type="match status" value="1"/>
</dbReference>
<dbReference type="SUPFAM" id="SSF56059">
    <property type="entry name" value="Glutathione synthetase ATP-binding domain-like"/>
    <property type="match status" value="1"/>
</dbReference>
<dbReference type="SUPFAM" id="SSF52440">
    <property type="entry name" value="PreATP-grasp domain"/>
    <property type="match status" value="1"/>
</dbReference>
<dbReference type="PROSITE" id="PS50975">
    <property type="entry name" value="ATP_GRASP"/>
    <property type="match status" value="1"/>
</dbReference>
<dbReference type="PROSITE" id="PS00843">
    <property type="entry name" value="DALA_DALA_LIGASE_1"/>
    <property type="match status" value="1"/>
</dbReference>
<dbReference type="PROSITE" id="PS00844">
    <property type="entry name" value="DALA_DALA_LIGASE_2"/>
    <property type="match status" value="1"/>
</dbReference>
<sequence length="378" mass="39981">MVTDHSTPVTGRPRVAILFGGRSSEHAVSCVTAAGVMGAIDKNKYEVIPIGIAKSGQWVLASGDTSEWSLSSAALPEVAPSGRTVTLAEVGGEHQLIVTEPNAVPQELGSVDVVFPLLHGPWGEDGTIQGLLELSDTRYVGAGVLASAVGMDKHFMKVVFESAGLSVGPYVAVTDREWSTDAEAVRKRVDKLGFPVFVKPARAGSSMGISKVDSMEGLDAAIDEARRHDLKLVIEAGIVGREIECAVLQGRGTDAPRTSMPGEIAVAVGEHQFYDFAAKYVEDGAAALSCPADMPDEAIARVRELAAVAFDAVGAEGLSRVDFFYTPAGELIINEINTMPGFTPKSMYPQMWAASGLAYGDLIDELIHLALTRKTGLR</sequence>
<gene>
    <name evidence="2" type="primary">ddl</name>
    <name type="ordered locus">AAur_2481</name>
</gene>
<proteinExistence type="inferred from homology"/>
<keyword id="KW-0067">ATP-binding</keyword>
<keyword id="KW-0133">Cell shape</keyword>
<keyword id="KW-0961">Cell wall biogenesis/degradation</keyword>
<keyword id="KW-0963">Cytoplasm</keyword>
<keyword id="KW-0436">Ligase</keyword>
<keyword id="KW-0460">Magnesium</keyword>
<keyword id="KW-0464">Manganese</keyword>
<keyword id="KW-0479">Metal-binding</keyword>
<keyword id="KW-0547">Nucleotide-binding</keyword>
<keyword id="KW-0573">Peptidoglycan synthesis</keyword>
<comment type="function">
    <text evidence="2">Cell wall formation.</text>
</comment>
<comment type="catalytic activity">
    <reaction evidence="2">
        <text>2 D-alanine + ATP = D-alanyl-D-alanine + ADP + phosphate + H(+)</text>
        <dbReference type="Rhea" id="RHEA:11224"/>
        <dbReference type="ChEBI" id="CHEBI:15378"/>
        <dbReference type="ChEBI" id="CHEBI:30616"/>
        <dbReference type="ChEBI" id="CHEBI:43474"/>
        <dbReference type="ChEBI" id="CHEBI:57416"/>
        <dbReference type="ChEBI" id="CHEBI:57822"/>
        <dbReference type="ChEBI" id="CHEBI:456216"/>
        <dbReference type="EC" id="6.3.2.4"/>
    </reaction>
</comment>
<comment type="cofactor">
    <cofactor evidence="1">
        <name>Mg(2+)</name>
        <dbReference type="ChEBI" id="CHEBI:18420"/>
    </cofactor>
    <cofactor evidence="1">
        <name>Mn(2+)</name>
        <dbReference type="ChEBI" id="CHEBI:29035"/>
    </cofactor>
    <text evidence="1">Binds 2 magnesium or manganese ions per subunit.</text>
</comment>
<comment type="pathway">
    <text evidence="2">Cell wall biogenesis; peptidoglycan biosynthesis.</text>
</comment>
<comment type="subcellular location">
    <subcellularLocation>
        <location evidence="2">Cytoplasm</location>
    </subcellularLocation>
</comment>
<comment type="similarity">
    <text evidence="2">Belongs to the D-alanine--D-alanine ligase family.</text>
</comment>
<reference key="1">
    <citation type="journal article" date="2006" name="PLoS Genet.">
        <title>Secrets of soil survival revealed by the genome sequence of Arthrobacter aurescens TC1.</title>
        <authorList>
            <person name="Mongodin E.F."/>
            <person name="Shapir N."/>
            <person name="Daugherty S.C."/>
            <person name="DeBoy R.T."/>
            <person name="Emerson J.B."/>
            <person name="Shvartzbeyn A."/>
            <person name="Radune D."/>
            <person name="Vamathevan J."/>
            <person name="Riggs F."/>
            <person name="Grinberg V."/>
            <person name="Khouri H.M."/>
            <person name="Wackett L.P."/>
            <person name="Nelson K.E."/>
            <person name="Sadowsky M.J."/>
        </authorList>
    </citation>
    <scope>NUCLEOTIDE SEQUENCE [LARGE SCALE GENOMIC DNA]</scope>
    <source>
        <strain>TC1</strain>
    </source>
</reference>